<dbReference type="EMBL" id="AF302786">
    <property type="protein sequence ID" value="AAG27706.1"/>
    <property type="molecule type" value="mRNA"/>
</dbReference>
<dbReference type="EMBL" id="AL031709">
    <property type="protein sequence ID" value="CAB56184.1"/>
    <property type="molecule type" value="Genomic_DNA"/>
</dbReference>
<dbReference type="EMBL" id="AK312067">
    <property type="protein sequence ID" value="BAG35003.1"/>
    <property type="molecule type" value="mRNA"/>
</dbReference>
<dbReference type="EMBL" id="CH471112">
    <property type="protein sequence ID" value="EAW85668.1"/>
    <property type="molecule type" value="Genomic_DNA"/>
</dbReference>
<dbReference type="EMBL" id="BC014592">
    <property type="protein sequence ID" value="AAH14592.1"/>
    <property type="molecule type" value="mRNA"/>
</dbReference>
<dbReference type="EMBL" id="AY203933">
    <property type="protein sequence ID" value="AAP34456.1"/>
    <property type="status" value="ALT_INIT"/>
    <property type="molecule type" value="mRNA"/>
</dbReference>
<dbReference type="CCDS" id="CCDS10436.1"/>
<dbReference type="PIR" id="T45062">
    <property type="entry name" value="T45062"/>
</dbReference>
<dbReference type="RefSeq" id="NP_115909.1">
    <property type="nucleotide sequence ID" value="NM_032520.5"/>
</dbReference>
<dbReference type="SMR" id="Q9UJJ9"/>
<dbReference type="BioGRID" id="124144">
    <property type="interactions" value="95"/>
</dbReference>
<dbReference type="ComplexPortal" id="CPX-6841">
    <property type="entry name" value="N-acetylglucosamine-1-phosphotransferase complex"/>
</dbReference>
<dbReference type="FunCoup" id="Q9UJJ9">
    <property type="interactions" value="448"/>
</dbReference>
<dbReference type="IntAct" id="Q9UJJ9">
    <property type="interactions" value="30"/>
</dbReference>
<dbReference type="MINT" id="Q9UJJ9"/>
<dbReference type="STRING" id="9606.ENSP00000204679"/>
<dbReference type="GlyConnect" id="2942">
    <property type="glycosylation" value="3 N-Linked glycans (1 site)"/>
</dbReference>
<dbReference type="GlyCosmos" id="Q9UJJ9">
    <property type="glycosylation" value="4 sites, 8 glycans"/>
</dbReference>
<dbReference type="GlyGen" id="Q9UJJ9">
    <property type="glycosylation" value="11 sites, 16 N-linked glycans (1 site), 4 O-linked glycans (9 sites)"/>
</dbReference>
<dbReference type="iPTMnet" id="Q9UJJ9"/>
<dbReference type="PhosphoSitePlus" id="Q9UJJ9"/>
<dbReference type="BioMuta" id="GNPTG"/>
<dbReference type="CPTAC" id="CPTAC-2710"/>
<dbReference type="jPOST" id="Q9UJJ9"/>
<dbReference type="MassIVE" id="Q9UJJ9"/>
<dbReference type="PaxDb" id="9606-ENSP00000204679"/>
<dbReference type="PeptideAtlas" id="Q9UJJ9"/>
<dbReference type="ProteomicsDB" id="84628"/>
<dbReference type="Pumba" id="Q9UJJ9"/>
<dbReference type="Antibodypedia" id="1360">
    <property type="antibodies" value="102 antibodies from 15 providers"/>
</dbReference>
<dbReference type="DNASU" id="84572"/>
<dbReference type="Ensembl" id="ENST00000204679.9">
    <property type="protein sequence ID" value="ENSP00000204679.4"/>
    <property type="gene ID" value="ENSG00000090581.11"/>
</dbReference>
<dbReference type="GeneID" id="84572"/>
<dbReference type="KEGG" id="hsa:84572"/>
<dbReference type="MANE-Select" id="ENST00000204679.9">
    <property type="protein sequence ID" value="ENSP00000204679.4"/>
    <property type="RefSeq nucleotide sequence ID" value="NM_032520.5"/>
    <property type="RefSeq protein sequence ID" value="NP_115909.1"/>
</dbReference>
<dbReference type="UCSC" id="uc002clm.4">
    <property type="organism name" value="human"/>
</dbReference>
<dbReference type="AGR" id="HGNC:23026"/>
<dbReference type="CTD" id="84572"/>
<dbReference type="DisGeNET" id="84572"/>
<dbReference type="GeneCards" id="GNPTG"/>
<dbReference type="GeneReviews" id="GNPTG"/>
<dbReference type="HGNC" id="HGNC:23026">
    <property type="gene designation" value="GNPTG"/>
</dbReference>
<dbReference type="HPA" id="ENSG00000090581">
    <property type="expression patterns" value="Low tissue specificity"/>
</dbReference>
<dbReference type="MalaCards" id="GNPTG"/>
<dbReference type="MIM" id="252605">
    <property type="type" value="phenotype"/>
</dbReference>
<dbReference type="MIM" id="607838">
    <property type="type" value="gene"/>
</dbReference>
<dbReference type="neXtProt" id="NX_Q9UJJ9"/>
<dbReference type="OpenTargets" id="ENSG00000090581"/>
<dbReference type="Orphanet" id="423470">
    <property type="disease" value="Mucolipidosis type III gamma"/>
</dbReference>
<dbReference type="PharmGKB" id="PA134990433"/>
<dbReference type="VEuPathDB" id="HostDB:ENSG00000090581"/>
<dbReference type="eggNOG" id="KOG2397">
    <property type="taxonomic scope" value="Eukaryota"/>
</dbReference>
<dbReference type="GeneTree" id="ENSGT00510000048359"/>
<dbReference type="HOGENOM" id="CLU_075705_0_0_1"/>
<dbReference type="InParanoid" id="Q9UJJ9"/>
<dbReference type="OMA" id="CGSKNRQ"/>
<dbReference type="OrthoDB" id="28322at2759"/>
<dbReference type="PAN-GO" id="Q9UJJ9">
    <property type="GO annotations" value="1 GO annotation based on evolutionary models"/>
</dbReference>
<dbReference type="PhylomeDB" id="Q9UJJ9"/>
<dbReference type="TreeFam" id="TF329550"/>
<dbReference type="BRENDA" id="2.7.8.17">
    <property type="organism ID" value="2681"/>
</dbReference>
<dbReference type="PathwayCommons" id="Q9UJJ9"/>
<dbReference type="SignaLink" id="Q9UJJ9"/>
<dbReference type="BioGRID-ORCS" id="84572">
    <property type="hits" value="20 hits in 1157 CRISPR screens"/>
</dbReference>
<dbReference type="ChiTaRS" id="GNPTG">
    <property type="organism name" value="human"/>
</dbReference>
<dbReference type="GenomeRNAi" id="84572"/>
<dbReference type="Pharos" id="Q9UJJ9">
    <property type="development level" value="Tbio"/>
</dbReference>
<dbReference type="PRO" id="PR:Q9UJJ9"/>
<dbReference type="Proteomes" id="UP000005640">
    <property type="component" value="Chromosome 16"/>
</dbReference>
<dbReference type="RNAct" id="Q9UJJ9">
    <property type="molecule type" value="protein"/>
</dbReference>
<dbReference type="Bgee" id="ENSG00000090581">
    <property type="expression patterns" value="Expressed in right adrenal gland cortex and 182 other cell types or tissues"/>
</dbReference>
<dbReference type="ExpressionAtlas" id="Q9UJJ9">
    <property type="expression patterns" value="baseline and differential"/>
</dbReference>
<dbReference type="GO" id="GO:0070062">
    <property type="term" value="C:extracellular exosome"/>
    <property type="evidence" value="ECO:0007005"/>
    <property type="project" value="UniProtKB"/>
</dbReference>
<dbReference type="GO" id="GO:0005794">
    <property type="term" value="C:Golgi apparatus"/>
    <property type="evidence" value="ECO:0000314"/>
    <property type="project" value="ComplexPortal"/>
</dbReference>
<dbReference type="GO" id="GO:0070622">
    <property type="term" value="C:UDP-N-acetylglucosamine-lysosomal-enzyme N-acetylglucosaminephosphotransferase complex"/>
    <property type="evidence" value="ECO:0000353"/>
    <property type="project" value="ComplexPortal"/>
</dbReference>
<dbReference type="GO" id="GO:0042803">
    <property type="term" value="F:protein homodimerization activity"/>
    <property type="evidence" value="ECO:0000250"/>
    <property type="project" value="UniProtKB"/>
</dbReference>
<dbReference type="GO" id="GO:0046835">
    <property type="term" value="P:carbohydrate phosphorylation"/>
    <property type="evidence" value="ECO:0000314"/>
    <property type="project" value="UniProtKB"/>
</dbReference>
<dbReference type="GO" id="GO:0016256">
    <property type="term" value="P:N-glycan processing to lysosome"/>
    <property type="evidence" value="ECO:0000303"/>
    <property type="project" value="ComplexPortal"/>
</dbReference>
<dbReference type="FunFam" id="2.70.130.10:FF:000018">
    <property type="entry name" value="N-acetylglucosamine-1-phosphotransferase subunit gamma"/>
    <property type="match status" value="1"/>
</dbReference>
<dbReference type="Gene3D" id="2.70.130.10">
    <property type="entry name" value="Mannose-6-phosphate receptor binding domain"/>
    <property type="match status" value="1"/>
</dbReference>
<dbReference type="InterPro" id="IPR010506">
    <property type="entry name" value="DMAP1-bd"/>
</dbReference>
<dbReference type="InterPro" id="IPR039794">
    <property type="entry name" value="Gtb1-like"/>
</dbReference>
<dbReference type="InterPro" id="IPR009011">
    <property type="entry name" value="Man6P_isomerase_rcpt-bd_dom_sf"/>
</dbReference>
<dbReference type="InterPro" id="IPR044865">
    <property type="entry name" value="MRH_dom"/>
</dbReference>
<dbReference type="InterPro" id="IPR012913">
    <property type="entry name" value="OS9-like_dom"/>
</dbReference>
<dbReference type="PANTHER" id="PTHR12630:SF6">
    <property type="entry name" value="N-ACETYLGLUCOSAMINE-1-PHOSPHOTRANSFERASE SUBUNIT GAMMA"/>
    <property type="match status" value="1"/>
</dbReference>
<dbReference type="PANTHER" id="PTHR12630">
    <property type="entry name" value="N-LINKED OLIGOSACCHARIDE PROCESSING"/>
    <property type="match status" value="1"/>
</dbReference>
<dbReference type="Pfam" id="PF07915">
    <property type="entry name" value="PRKCSH"/>
    <property type="match status" value="1"/>
</dbReference>
<dbReference type="SMART" id="SM01137">
    <property type="entry name" value="DMAP_binding"/>
    <property type="match status" value="1"/>
</dbReference>
<dbReference type="SUPFAM" id="SSF50911">
    <property type="entry name" value="Mannose 6-phosphate receptor domain"/>
    <property type="match status" value="1"/>
</dbReference>
<dbReference type="PROSITE" id="PS51912">
    <property type="entry name" value="DMAP1_BIND"/>
    <property type="match status" value="1"/>
</dbReference>
<dbReference type="PROSITE" id="PS51914">
    <property type="entry name" value="MRH"/>
    <property type="match status" value="1"/>
</dbReference>
<proteinExistence type="evidence at protein level"/>
<reference key="1">
    <citation type="journal article" date="2000" name="J. Clin. Invest.">
        <title>Molecular basis of variant pseudo-Hurler polydystrophy (mucolipidosis IIIC).</title>
        <authorList>
            <person name="Raas-Rothschild A."/>
            <person name="Cormier-Daire V."/>
            <person name="Bao M."/>
            <person name="Genin E."/>
            <person name="Salomon R."/>
            <person name="Brewer K."/>
            <person name="Zeigler M."/>
            <person name="Mandel H."/>
            <person name="Toth S."/>
            <person name="Roe B."/>
            <person name="Munnich A."/>
            <person name="Canfield W.M."/>
        </authorList>
    </citation>
    <scope>NUCLEOTIDE SEQUENCE [MRNA]</scope>
    <scope>FUNCTION</scope>
    <scope>SUBUNIT</scope>
    <scope>TISSUE SPECIFICITY</scope>
    <scope>INVOLVEMENT IN MLIIIC</scope>
    <source>
        <tissue>Brain</tissue>
    </source>
</reference>
<reference key="2">
    <citation type="submission" date="2000-09" db="EMBL/GenBank/DDBJ databases">
        <title>cDNA from human fetal brain.</title>
        <authorList>
            <person name="Fitzgerald P."/>
            <person name="Amarante-Mendes G.P."/>
            <person name="Li W."/>
            <person name="Green D.R."/>
        </authorList>
    </citation>
    <scope>NUCLEOTIDE SEQUENCE [MRNA]</scope>
    <source>
        <tissue>Fetal brain</tissue>
    </source>
</reference>
<reference key="3">
    <citation type="journal article" date="2004" name="Nat. Genet.">
        <title>Complete sequencing and characterization of 21,243 full-length human cDNAs.</title>
        <authorList>
            <person name="Ota T."/>
            <person name="Suzuki Y."/>
            <person name="Nishikawa T."/>
            <person name="Otsuki T."/>
            <person name="Sugiyama T."/>
            <person name="Irie R."/>
            <person name="Wakamatsu A."/>
            <person name="Hayashi K."/>
            <person name="Sato H."/>
            <person name="Nagai K."/>
            <person name="Kimura K."/>
            <person name="Makita H."/>
            <person name="Sekine M."/>
            <person name="Obayashi M."/>
            <person name="Nishi T."/>
            <person name="Shibahara T."/>
            <person name="Tanaka T."/>
            <person name="Ishii S."/>
            <person name="Yamamoto J."/>
            <person name="Saito K."/>
            <person name="Kawai Y."/>
            <person name="Isono Y."/>
            <person name="Nakamura Y."/>
            <person name="Nagahari K."/>
            <person name="Murakami K."/>
            <person name="Yasuda T."/>
            <person name="Iwayanagi T."/>
            <person name="Wagatsuma M."/>
            <person name="Shiratori A."/>
            <person name="Sudo H."/>
            <person name="Hosoiri T."/>
            <person name="Kaku Y."/>
            <person name="Kodaira H."/>
            <person name="Kondo H."/>
            <person name="Sugawara M."/>
            <person name="Takahashi M."/>
            <person name="Kanda K."/>
            <person name="Yokoi T."/>
            <person name="Furuya T."/>
            <person name="Kikkawa E."/>
            <person name="Omura Y."/>
            <person name="Abe K."/>
            <person name="Kamihara K."/>
            <person name="Katsuta N."/>
            <person name="Sato K."/>
            <person name="Tanikawa M."/>
            <person name="Yamazaki M."/>
            <person name="Ninomiya K."/>
            <person name="Ishibashi T."/>
            <person name="Yamashita H."/>
            <person name="Murakawa K."/>
            <person name="Fujimori K."/>
            <person name="Tanai H."/>
            <person name="Kimata M."/>
            <person name="Watanabe M."/>
            <person name="Hiraoka S."/>
            <person name="Chiba Y."/>
            <person name="Ishida S."/>
            <person name="Ono Y."/>
            <person name="Takiguchi S."/>
            <person name="Watanabe S."/>
            <person name="Yosida M."/>
            <person name="Hotuta T."/>
            <person name="Kusano J."/>
            <person name="Kanehori K."/>
            <person name="Takahashi-Fujii A."/>
            <person name="Hara H."/>
            <person name="Tanase T.-O."/>
            <person name="Nomura Y."/>
            <person name="Togiya S."/>
            <person name="Komai F."/>
            <person name="Hara R."/>
            <person name="Takeuchi K."/>
            <person name="Arita M."/>
            <person name="Imose N."/>
            <person name="Musashino K."/>
            <person name="Yuuki H."/>
            <person name="Oshima A."/>
            <person name="Sasaki N."/>
            <person name="Aotsuka S."/>
            <person name="Yoshikawa Y."/>
            <person name="Matsunawa H."/>
            <person name="Ichihara T."/>
            <person name="Shiohata N."/>
            <person name="Sano S."/>
            <person name="Moriya S."/>
            <person name="Momiyama H."/>
            <person name="Satoh N."/>
            <person name="Takami S."/>
            <person name="Terashima Y."/>
            <person name="Suzuki O."/>
            <person name="Nakagawa S."/>
            <person name="Senoh A."/>
            <person name="Mizoguchi H."/>
            <person name="Goto Y."/>
            <person name="Shimizu F."/>
            <person name="Wakebe H."/>
            <person name="Hishigaki H."/>
            <person name="Watanabe T."/>
            <person name="Sugiyama A."/>
            <person name="Takemoto M."/>
            <person name="Kawakami B."/>
            <person name="Yamazaki M."/>
            <person name="Watanabe K."/>
            <person name="Kumagai A."/>
            <person name="Itakura S."/>
            <person name="Fukuzumi Y."/>
            <person name="Fujimori Y."/>
            <person name="Komiyama M."/>
            <person name="Tashiro H."/>
            <person name="Tanigami A."/>
            <person name="Fujiwara T."/>
            <person name="Ono T."/>
            <person name="Yamada K."/>
            <person name="Fujii Y."/>
            <person name="Ozaki K."/>
            <person name="Hirao M."/>
            <person name="Ohmori Y."/>
            <person name="Kawabata A."/>
            <person name="Hikiji T."/>
            <person name="Kobatake N."/>
            <person name="Inagaki H."/>
            <person name="Ikema Y."/>
            <person name="Okamoto S."/>
            <person name="Okitani R."/>
            <person name="Kawakami T."/>
            <person name="Noguchi S."/>
            <person name="Itoh T."/>
            <person name="Shigeta K."/>
            <person name="Senba T."/>
            <person name="Matsumura K."/>
            <person name="Nakajima Y."/>
            <person name="Mizuno T."/>
            <person name="Morinaga M."/>
            <person name="Sasaki M."/>
            <person name="Togashi T."/>
            <person name="Oyama M."/>
            <person name="Hata H."/>
            <person name="Watanabe M."/>
            <person name="Komatsu T."/>
            <person name="Mizushima-Sugano J."/>
            <person name="Satoh T."/>
            <person name="Shirai Y."/>
            <person name="Takahashi Y."/>
            <person name="Nakagawa K."/>
            <person name="Okumura K."/>
            <person name="Nagase T."/>
            <person name="Nomura N."/>
            <person name="Kikuchi H."/>
            <person name="Masuho Y."/>
            <person name="Yamashita R."/>
            <person name="Nakai K."/>
            <person name="Yada T."/>
            <person name="Nakamura Y."/>
            <person name="Ohara O."/>
            <person name="Isogai T."/>
            <person name="Sugano S."/>
        </authorList>
    </citation>
    <scope>NUCLEOTIDE SEQUENCE [LARGE SCALE MRNA]</scope>
    <source>
        <tissue>Tongue</tissue>
    </source>
</reference>
<reference key="4">
    <citation type="journal article" date="2004" name="Nature">
        <title>The sequence and analysis of duplication-rich human chromosome 16.</title>
        <authorList>
            <person name="Martin J."/>
            <person name="Han C."/>
            <person name="Gordon L.A."/>
            <person name="Terry A."/>
            <person name="Prabhakar S."/>
            <person name="She X."/>
            <person name="Xie G."/>
            <person name="Hellsten U."/>
            <person name="Chan Y.M."/>
            <person name="Altherr M."/>
            <person name="Couronne O."/>
            <person name="Aerts A."/>
            <person name="Bajorek E."/>
            <person name="Black S."/>
            <person name="Blumer H."/>
            <person name="Branscomb E."/>
            <person name="Brown N.C."/>
            <person name="Bruno W.J."/>
            <person name="Buckingham J.M."/>
            <person name="Callen D.F."/>
            <person name="Campbell C.S."/>
            <person name="Campbell M.L."/>
            <person name="Campbell E.W."/>
            <person name="Caoile C."/>
            <person name="Challacombe J.F."/>
            <person name="Chasteen L.A."/>
            <person name="Chertkov O."/>
            <person name="Chi H.C."/>
            <person name="Christensen M."/>
            <person name="Clark L.M."/>
            <person name="Cohn J.D."/>
            <person name="Denys M."/>
            <person name="Detter J.C."/>
            <person name="Dickson M."/>
            <person name="Dimitrijevic-Bussod M."/>
            <person name="Escobar J."/>
            <person name="Fawcett J.J."/>
            <person name="Flowers D."/>
            <person name="Fotopulos D."/>
            <person name="Glavina T."/>
            <person name="Gomez M."/>
            <person name="Gonzales E."/>
            <person name="Goodstein D."/>
            <person name="Goodwin L.A."/>
            <person name="Grady D.L."/>
            <person name="Grigoriev I."/>
            <person name="Groza M."/>
            <person name="Hammon N."/>
            <person name="Hawkins T."/>
            <person name="Haydu L."/>
            <person name="Hildebrand C.E."/>
            <person name="Huang W."/>
            <person name="Israni S."/>
            <person name="Jett J."/>
            <person name="Jewett P.B."/>
            <person name="Kadner K."/>
            <person name="Kimball H."/>
            <person name="Kobayashi A."/>
            <person name="Krawczyk M.-C."/>
            <person name="Leyba T."/>
            <person name="Longmire J.L."/>
            <person name="Lopez F."/>
            <person name="Lou Y."/>
            <person name="Lowry S."/>
            <person name="Ludeman T."/>
            <person name="Manohar C.F."/>
            <person name="Mark G.A."/>
            <person name="McMurray K.L."/>
            <person name="Meincke L.J."/>
            <person name="Morgan J."/>
            <person name="Moyzis R.K."/>
            <person name="Mundt M.O."/>
            <person name="Munk A.C."/>
            <person name="Nandkeshwar R.D."/>
            <person name="Pitluck S."/>
            <person name="Pollard M."/>
            <person name="Predki P."/>
            <person name="Parson-Quintana B."/>
            <person name="Ramirez L."/>
            <person name="Rash S."/>
            <person name="Retterer J."/>
            <person name="Ricke D.O."/>
            <person name="Robinson D.L."/>
            <person name="Rodriguez A."/>
            <person name="Salamov A."/>
            <person name="Saunders E.H."/>
            <person name="Scott D."/>
            <person name="Shough T."/>
            <person name="Stallings R.L."/>
            <person name="Stalvey M."/>
            <person name="Sutherland R.D."/>
            <person name="Tapia R."/>
            <person name="Tesmer J.G."/>
            <person name="Thayer N."/>
            <person name="Thompson L.S."/>
            <person name="Tice H."/>
            <person name="Torney D.C."/>
            <person name="Tran-Gyamfi M."/>
            <person name="Tsai M."/>
            <person name="Ulanovsky L.E."/>
            <person name="Ustaszewska A."/>
            <person name="Vo N."/>
            <person name="White P.S."/>
            <person name="Williams A.L."/>
            <person name="Wills P.L."/>
            <person name="Wu J.-R."/>
            <person name="Wu K."/>
            <person name="Yang J."/>
            <person name="DeJong P."/>
            <person name="Bruce D."/>
            <person name="Doggett N.A."/>
            <person name="Deaven L."/>
            <person name="Schmutz J."/>
            <person name="Grimwood J."/>
            <person name="Richardson P."/>
            <person name="Rokhsar D.S."/>
            <person name="Eichler E.E."/>
            <person name="Gilna P."/>
            <person name="Lucas S.M."/>
            <person name="Myers R.M."/>
            <person name="Rubin E.M."/>
            <person name="Pennacchio L.A."/>
        </authorList>
    </citation>
    <scope>NUCLEOTIDE SEQUENCE [LARGE SCALE GENOMIC DNA]</scope>
</reference>
<reference key="5">
    <citation type="submission" date="2005-09" db="EMBL/GenBank/DDBJ databases">
        <authorList>
            <person name="Mural R.J."/>
            <person name="Istrail S."/>
            <person name="Sutton G.G."/>
            <person name="Florea L."/>
            <person name="Halpern A.L."/>
            <person name="Mobarry C.M."/>
            <person name="Lippert R."/>
            <person name="Walenz B."/>
            <person name="Shatkay H."/>
            <person name="Dew I."/>
            <person name="Miller J.R."/>
            <person name="Flanigan M.J."/>
            <person name="Edwards N.J."/>
            <person name="Bolanos R."/>
            <person name="Fasulo D."/>
            <person name="Halldorsson B.V."/>
            <person name="Hannenhalli S."/>
            <person name="Turner R."/>
            <person name="Yooseph S."/>
            <person name="Lu F."/>
            <person name="Nusskern D.R."/>
            <person name="Shue B.C."/>
            <person name="Zheng X.H."/>
            <person name="Zhong F."/>
            <person name="Delcher A.L."/>
            <person name="Huson D.H."/>
            <person name="Kravitz S.A."/>
            <person name="Mouchard L."/>
            <person name="Reinert K."/>
            <person name="Remington K.A."/>
            <person name="Clark A.G."/>
            <person name="Waterman M.S."/>
            <person name="Eichler E.E."/>
            <person name="Adams M.D."/>
            <person name="Hunkapiller M.W."/>
            <person name="Myers E.W."/>
            <person name="Venter J.C."/>
        </authorList>
    </citation>
    <scope>NUCLEOTIDE SEQUENCE [LARGE SCALE GENOMIC DNA]</scope>
</reference>
<reference key="6">
    <citation type="journal article" date="2004" name="Genome Res.">
        <title>The status, quality, and expansion of the NIH full-length cDNA project: the Mammalian Gene Collection (MGC).</title>
        <authorList>
            <consortium name="The MGC Project Team"/>
        </authorList>
    </citation>
    <scope>NUCLEOTIDE SEQUENCE [LARGE SCALE MRNA]</scope>
    <source>
        <tissue>Testis</tissue>
    </source>
</reference>
<reference key="7">
    <citation type="journal article" date="2004" name="Proc. Natl. Acad. Sci. U.S.A.">
        <title>Large-scale cDNA transfection screening for genes related to cancer development and progression.</title>
        <authorList>
            <person name="Wan D."/>
            <person name="Gong Y."/>
            <person name="Qin W."/>
            <person name="Zhang P."/>
            <person name="Li J."/>
            <person name="Wei L."/>
            <person name="Zhou X."/>
            <person name="Li H."/>
            <person name="Qiu X."/>
            <person name="Zhong F."/>
            <person name="He L."/>
            <person name="Yu J."/>
            <person name="Yao G."/>
            <person name="Jiang H."/>
            <person name="Qian L."/>
            <person name="Yu Y."/>
            <person name="Shu H."/>
            <person name="Chen X."/>
            <person name="Xu H."/>
            <person name="Guo M."/>
            <person name="Pan Z."/>
            <person name="Chen Y."/>
            <person name="Ge C."/>
            <person name="Yang S."/>
            <person name="Gu J."/>
        </authorList>
    </citation>
    <scope>NUCLEOTIDE SEQUENCE [LARGE SCALE MRNA] OF 2-305</scope>
</reference>
<reference key="8">
    <citation type="journal article" date="2004" name="J. Med. Genet.">
        <title>Genomic organisation of the UDP-N-acetylglucosamine-1-phosphotransferase gamma subunit (GNPTAG) and its mutations in mucolipidosis III.</title>
        <authorList>
            <person name="Raas-Rothschild A."/>
            <person name="Bargal R."/>
            <person name="Goldman O."/>
            <person name="Ben-Asher E."/>
            <person name="Groener J.E."/>
            <person name="Toutain A."/>
            <person name="Stemmer E."/>
            <person name="Ben-Neriah Z."/>
            <person name="Flusser H."/>
            <person name="Beemer F.A."/>
            <person name="Penttinen M."/>
            <person name="Olender T."/>
            <person name="Rein A.J."/>
            <person name="Bach G."/>
            <person name="Zeigler M."/>
        </authorList>
    </citation>
    <scope>INVOLVEMENT IN MLIIIC</scope>
    <scope>VARIANT MLIIIC SER-106</scope>
</reference>
<reference key="9">
    <citation type="journal article" date="2010" name="J. Biol. Chem.">
        <title>Functions of the alpha, beta, and gamma subunits of UDP-GlcNAc:lysosomal enzyme N-acetylglucosamine-1-phosphotransferase.</title>
        <authorList>
            <person name="Qian Y."/>
            <person name="Lee I."/>
            <person name="Lee W.S."/>
            <person name="Qian M."/>
            <person name="Kudo M."/>
            <person name="Canfield W.M."/>
            <person name="Lobel P."/>
            <person name="Kornfeld S."/>
        </authorList>
    </citation>
    <scope>FUNCTION</scope>
    <scope>SUBUNIT</scope>
</reference>
<reference key="10">
    <citation type="journal article" date="2010" name="N. Engl. J. Med.">
        <title>Mutations in the lysosomal enzyme-targeting pathway and persistent stuttering.</title>
        <authorList>
            <person name="Kang C."/>
            <person name="Riazuddin S."/>
            <person name="Mundorff J."/>
            <person name="Krasnewich D."/>
            <person name="Friedman P."/>
            <person name="Mullikin J.C."/>
            <person name="Drayna D."/>
        </authorList>
    </citation>
    <scope>POSSIBLE INVOLVEMENT IN PERSISTENT STUTTERING</scope>
    <scope>VARIANTS ALA-ARG-LEU-5 INS; GLU-25 AND VAL-230</scope>
</reference>
<reference key="11">
    <citation type="journal article" date="2011" name="J. Biol. Chem.">
        <title>Post-translational modifications of the gamma-subunit affect intracellular trafficking and complex assembly of GlcNAc-1-phosphotransferase.</title>
        <authorList>
            <person name="Encarnacao M."/>
            <person name="Kollmann K."/>
            <person name="Trusch M."/>
            <person name="Braulke T."/>
            <person name="Pohl S."/>
        </authorList>
    </citation>
    <scope>GLYCOSYLATION</scope>
</reference>
<reference key="12">
    <citation type="journal article" date="2004" name="Hum. Mutat.">
        <title>A novel mutation in UDP-N-acetylglucosamine-1-phosphotransferase gamma subunit (GNPTAG) in two siblings with mucolipidosis type III alters a used glycosylation site.</title>
        <authorList>
            <person name="Tiede S."/>
            <person name="Cantz M."/>
            <person name="Raas-Rothschild A."/>
            <person name="Muschol N."/>
            <person name="Buerger F."/>
            <person name="Ullrich K."/>
            <person name="Braulke T."/>
        </authorList>
    </citation>
    <scope>VARIANT MLIIIC ASN-115 DEL</scope>
    <scope>HOMODIMERIZATION</scope>
    <scope>GLYCOSYLATION AT ASN-115</scope>
    <scope>SUBCELLULAR LOCATION</scope>
</reference>
<reference key="13">
    <citation type="journal article" date="2009" name="Hum. Mutat.">
        <title>Identification and molecular characterization of six novel mutations in the UDP-N-acetylglucosamine-1-phosphotransferase gamma subunit (GNPTG) gene in patients with mucolipidosis III gamma.</title>
        <authorList>
            <person name="Persichetti E."/>
            <person name="Chuzhanova N.A."/>
            <person name="Dardis A."/>
            <person name="Tappino B."/>
            <person name="Pohl S."/>
            <person name="Thomas N.S."/>
            <person name="Rosano C."/>
            <person name="Balducci C."/>
            <person name="Paciotti S."/>
            <person name="Dominissini S."/>
            <person name="Montalvo A.L."/>
            <person name="Sibilio M."/>
            <person name="Parini R."/>
            <person name="Rigoldi M."/>
            <person name="Di Rocco M."/>
            <person name="Parenti G."/>
            <person name="Orlacchio A."/>
            <person name="Bembi B."/>
            <person name="Cooper D.N."/>
            <person name="Filocamo M."/>
            <person name="Beccari T."/>
        </authorList>
    </citation>
    <scope>VARIANTS MLIIIC SER-106 AND ASN-115 DEL</scope>
    <scope>VARIANT MET-286</scope>
</reference>
<reference key="14">
    <citation type="journal article" date="2014" name="Gene">
        <title>Three novel homozygous mutations in the GNPTG gene that cause mucolipidosis type III gamma.</title>
        <authorList>
            <person name="Liu S."/>
            <person name="Zhang W."/>
            <person name="Shi H."/>
            <person name="Meng Y."/>
            <person name="Qiu Z."/>
        </authorList>
    </citation>
    <scope>VARIANT MLIIIC TYR-142</scope>
</reference>
<reference key="15">
    <citation type="journal article" date="2015" name="Am. J. Med. Genet. A">
        <title>Tuberous sclerosis, polycystic kidney disease and mucolipidosis III gamma caused by a microdeletion unmasking a recessive mutation.</title>
        <authorList>
            <person name="Barea J.J."/>
            <person name="van Meel E."/>
            <person name="Kornfeld S."/>
            <person name="Bird L.M."/>
        </authorList>
    </citation>
    <scope>VARIANT MLIIIC SER-126</scope>
    <scope>CHARACTERIZATION OF VARIANT MLIIIC SER-126</scope>
    <scope>SUBCELLULAR LOCATION</scope>
</reference>
<reference key="16">
    <citation type="journal article" date="2016" name="Hum. Mutat.">
        <title>Mucolipidosis III GNPTG missense mutations cause misfolding of the gamma subunit of GlcNAc-1-phosphotransferase.</title>
        <authorList>
            <person name="van Meel E."/>
            <person name="Kornfeld S."/>
        </authorList>
    </citation>
    <scope>CHARACTERIZATION OF VARIANT MLIIIC SER-106 AND TYR-142</scope>
    <scope>CHARACTERIZATION OF VARIANT MET-286</scope>
    <scope>SUBCELLULAR LOCATION</scope>
</reference>
<gene>
    <name type="primary">GNPTG</name>
    <name type="synonym">C16orf27</name>
    <name type="synonym">GNPTAG</name>
    <name type="ORF">CAB56184</name>
    <name type="ORF">LP2537</name>
</gene>
<feature type="signal peptide" evidence="2">
    <location>
        <begin position="1"/>
        <end position="24"/>
    </location>
</feature>
<feature type="chain" id="PRO_0000019577" description="N-acetylglucosamine-1-phosphotransferase subunit gamma">
    <location>
        <begin position="25"/>
        <end position="305"/>
    </location>
</feature>
<feature type="domain" description="MRH" evidence="4">
    <location>
        <begin position="69"/>
        <end position="171"/>
    </location>
</feature>
<feature type="domain" description="DMAP1-binding" evidence="3">
    <location>
        <begin position="176"/>
        <end position="279"/>
    </location>
</feature>
<feature type="region of interest" description="Disordered" evidence="5">
    <location>
        <begin position="267"/>
        <end position="305"/>
    </location>
</feature>
<feature type="compositionally biased region" description="Basic and acidic residues" evidence="5">
    <location>
        <begin position="281"/>
        <end position="296"/>
    </location>
</feature>
<feature type="glycosylation site" description="N-linked (GlcNAc...) asparagine" evidence="1">
    <location>
        <position position="88"/>
    </location>
</feature>
<feature type="glycosylation site" description="N-linked (GlcNAc...) asparagine" evidence="16">
    <location>
        <position position="115"/>
    </location>
</feature>
<feature type="disulfide bond" evidence="4">
    <location>
        <begin position="71"/>
        <end position="84"/>
    </location>
</feature>
<feature type="disulfide bond" evidence="4">
    <location>
        <begin position="129"/>
        <end position="157"/>
    </location>
</feature>
<feature type="disulfide bond" evidence="4">
    <location>
        <begin position="142"/>
        <end position="169"/>
    </location>
</feature>
<feature type="disulfide bond" description="Interchain" evidence="1">
    <location>
        <position position="245"/>
    </location>
</feature>
<feature type="sequence variant" id="VAR_073222" description="Rare variant; found in individuals suffering from stuttering; uncertain significance." evidence="11">
    <original>L</original>
    <variation>LARL</variation>
    <location>
        <position position="5"/>
    </location>
</feature>
<feature type="sequence variant" id="VAR_073223" description="Rare variant; found in individuals suffering from stuttering; uncertain significance; dbSNP:rs137853826." evidence="11">
    <original>A</original>
    <variation>E</variation>
    <location>
        <position position="25"/>
    </location>
</feature>
<feature type="sequence variant" id="VAR_077164" description="In MLIIIC; decreased localization to Golgi apparatus; dbSNP:rs137852885." evidence="7 9 14">
    <original>G</original>
    <variation>S</variation>
    <location>
        <position position="106"/>
    </location>
</feature>
<feature type="sequence variant" id="VAR_070815" description="In MLIIIC." evidence="8 9">
    <location>
        <position position="115"/>
    </location>
</feature>
<feature type="sequence variant" id="VAR_077165" description="In MLIIIC; loss of localization to Golgi apparatus; dbSNP:rs775359476." evidence="13">
    <original>G</original>
    <variation>S</variation>
    <location>
        <position position="126"/>
    </location>
</feature>
<feature type="sequence variant" id="VAR_070816" description="In MLIIIC; decreased localization to Golgi apparatus." evidence="12 14">
    <original>C</original>
    <variation>Y</variation>
    <location>
        <position position="142"/>
    </location>
</feature>
<feature type="sequence variant" id="VAR_073224" description="Rare variant; found in individuals suffering from stuttering; uncertain significance; dbSNP:rs137853827." evidence="11">
    <original>L</original>
    <variation>V</variation>
    <location>
        <position position="230"/>
    </location>
</feature>
<feature type="sequence variant" id="VAR_077166" description="Does not affect localization to Golgi apparatus; dbSNP:rs193302860." evidence="9 14">
    <original>T</original>
    <variation>M</variation>
    <location>
        <position position="286"/>
    </location>
</feature>
<feature type="sequence conflict" description="In Ref. 6; AAH14592." evidence="15" ref="6">
    <location>
        <position position="223"/>
    </location>
</feature>
<comment type="function">
    <text evidence="6 10">Non-catalytic subunit of the N-acetylglucosamine-1-phosphotransferase complex, an enzyme that catalyzes the formation of mannose 6-phosphate (M6P) markers on high mannose type oligosaccharides in the Golgi apparatus. Binds and presents the high mannose glycans of the acceptor to the catalytic alpha and beta subunits (GNPTAB). Enhances the rate of N-acetylglucosamine-1-phosphate transfer to the oligosaccharides of acid hydrolase acceptors.</text>
</comment>
<comment type="subunit">
    <text evidence="6 10">Homodimer; disulfide-linked. Hexamer of two alpha (GNPTAB), two beta (GNPTAB) and two gamma (GNPTG) subunits; disulfide-linked. The alpha and/or the beta subunits of the enzyme constitute the catalytic subunits.</text>
</comment>
<comment type="interaction">
    <interactant intactId="EBI-372067">
        <id>Q9UJJ9</id>
    </interactant>
    <interactant intactId="EBI-1104907">
        <id>Q3T906</id>
        <label>GNPTAB</label>
    </interactant>
    <organismsDiffer>false</organismsDiffer>
    <experiments>6</experiments>
</comment>
<comment type="subcellular location">
    <subcellularLocation>
        <location evidence="8">Secreted</location>
    </subcellularLocation>
    <subcellularLocation>
        <location evidence="8 13 14">Golgi apparatus</location>
    </subcellularLocation>
</comment>
<comment type="tissue specificity">
    <text evidence="6">Widely expressed.</text>
</comment>
<comment type="PTM">
    <text evidence="1">Cys-245 mediates the formation of the interchain disulfide bond for formation of the homodimer. Cys-142, Cys-157 and Cys-169 are involved in intramolecular disulfide bonds formation (By similarity).</text>
</comment>
<comment type="disease" evidence="6 7 8 9 12 13 14">
    <disease id="DI-01997">
        <name>Mucolipidosis type III complementation group C</name>
        <acronym>MLIIIC</acronym>
        <description>Autosomal recessive disease of lysosomal hydrolase trafficking. Unlike the related diseases, mucolipidosis II and IIIA, the enzyme affected in mucolipidosis IIIC (GlcNAc-phosphotransferase) retains full transferase activity on synthetic substrates but lacks activity on lysosomal hydrolases. Typical clinical findings include stiffness of the hands and shoulders, claw-hand deformity, scoliosis, short stature, coarse facies, and mild intellectual disability. Radiographically, severe dysostosis multiplex of the hip is characteristic and frequently disabling. The clinical diagnosis can be confirmed by finding elevated serum lysosomal enzyme levels and/or decreased lysosomal enzyme levels in cultured fibroblasts.</description>
        <dbReference type="MIM" id="252605"/>
    </disease>
    <text>The disease is caused by variants affecting the gene represented in this entry.</text>
</comment>
<comment type="disease">
    <text evidence="11">Defects in GNPTG have been suggested to play a role in susceptibility to persistent stuttering. Stuttering is a common speech disorder characterized by repetitions, prolongations, and interruptions in the flow of speech.</text>
</comment>
<comment type="sequence caution" evidence="15">
    <conflict type="erroneous initiation">
        <sequence resource="EMBL-CDS" id="AAP34456"/>
    </conflict>
</comment>
<sequence length="305" mass="33974">MAAGLARLLLLLGLSAGGPAPAGAAKMKVVEEPNAFGVNNPFLPQASRLQAKRDPSPVSGPVHLFRLSGKCFSLVESTYKYEFCPFHNVTQHEQTFRWNAYSGILGIWHEWEIANNTFTGMWMRDGDACRSRSRQSKVELACGKSNRLAHVSEPSTCVYALTFETPLVCHPHALLVYPTLPEALQRQWDQVEQDLADELITPQGHEKLLRTLFEDAGYLKTPEENEPTQLEGGPDSLGFETLENCRKAHKELSKEIKRLKGLLTQHGIPYTRPTETSNLEHLGHETPRAKSPEQLRGDPGLRGSL</sequence>
<keyword id="KW-0225">Disease variant</keyword>
<keyword id="KW-1015">Disulfide bond</keyword>
<keyword id="KW-0325">Glycoprotein</keyword>
<keyword id="KW-0333">Golgi apparatus</keyword>
<keyword id="KW-0942">Mucolipidosis</keyword>
<keyword id="KW-1267">Proteomics identification</keyword>
<keyword id="KW-1185">Reference proteome</keyword>
<keyword id="KW-0964">Secreted</keyword>
<keyword id="KW-0732">Signal</keyword>
<accession>Q9UJJ9</accession>
<accession>B2R556</accession>
<accession>Q6XYD7</accession>
<accession>Q96L13</accession>
<protein>
    <recommendedName>
        <fullName>N-acetylglucosamine-1-phosphotransferase subunit gamma</fullName>
    </recommendedName>
    <alternativeName>
        <fullName>GlcNAc-1-phosphotransferase subunit gamma</fullName>
    </alternativeName>
    <alternativeName>
        <fullName>UDP-N-acetylglucosamine-1-phosphotransferase subunit gamma</fullName>
    </alternativeName>
</protein>
<organism>
    <name type="scientific">Homo sapiens</name>
    <name type="common">Human</name>
    <dbReference type="NCBI Taxonomy" id="9606"/>
    <lineage>
        <taxon>Eukaryota</taxon>
        <taxon>Metazoa</taxon>
        <taxon>Chordata</taxon>
        <taxon>Craniata</taxon>
        <taxon>Vertebrata</taxon>
        <taxon>Euteleostomi</taxon>
        <taxon>Mammalia</taxon>
        <taxon>Eutheria</taxon>
        <taxon>Euarchontoglires</taxon>
        <taxon>Primates</taxon>
        <taxon>Haplorrhini</taxon>
        <taxon>Catarrhini</taxon>
        <taxon>Hominidae</taxon>
        <taxon>Homo</taxon>
    </lineage>
</organism>
<name>GNPTG_HUMAN</name>
<evidence type="ECO:0000250" key="1"/>
<evidence type="ECO:0000255" key="2"/>
<evidence type="ECO:0000255" key="3">
    <source>
        <dbReference type="PROSITE-ProRule" id="PRU01260"/>
    </source>
</evidence>
<evidence type="ECO:0000255" key="4">
    <source>
        <dbReference type="PROSITE-ProRule" id="PRU01262"/>
    </source>
</evidence>
<evidence type="ECO:0000256" key="5">
    <source>
        <dbReference type="SAM" id="MobiDB-lite"/>
    </source>
</evidence>
<evidence type="ECO:0000269" key="6">
    <source>
    </source>
</evidence>
<evidence type="ECO:0000269" key="7">
    <source>
    </source>
</evidence>
<evidence type="ECO:0000269" key="8">
    <source>
    </source>
</evidence>
<evidence type="ECO:0000269" key="9">
    <source>
    </source>
</evidence>
<evidence type="ECO:0000269" key="10">
    <source>
    </source>
</evidence>
<evidence type="ECO:0000269" key="11">
    <source>
    </source>
</evidence>
<evidence type="ECO:0000269" key="12">
    <source>
    </source>
</evidence>
<evidence type="ECO:0000269" key="13">
    <source>
    </source>
</evidence>
<evidence type="ECO:0000269" key="14">
    <source>
    </source>
</evidence>
<evidence type="ECO:0000305" key="15"/>
<evidence type="ECO:0000305" key="16">
    <source>
    </source>
</evidence>